<name>CYB_SORAN</name>
<organism>
    <name type="scientific">Sorex antinorii</name>
    <name type="common">Valais shrew</name>
    <dbReference type="NCBI Taxonomy" id="268768"/>
    <lineage>
        <taxon>Eukaryota</taxon>
        <taxon>Metazoa</taxon>
        <taxon>Chordata</taxon>
        <taxon>Craniata</taxon>
        <taxon>Vertebrata</taxon>
        <taxon>Euteleostomi</taxon>
        <taxon>Mammalia</taxon>
        <taxon>Eutheria</taxon>
        <taxon>Laurasiatheria</taxon>
        <taxon>Eulipotyphla</taxon>
        <taxon>Soricidae</taxon>
        <taxon>Soricinae</taxon>
        <taxon>Sorex</taxon>
    </lineage>
</organism>
<feature type="chain" id="PRO_0000254757" description="Cytochrome b">
    <location>
        <begin position="1"/>
        <end position="379"/>
    </location>
</feature>
<feature type="transmembrane region" description="Helical" evidence="2">
    <location>
        <begin position="33"/>
        <end position="53"/>
    </location>
</feature>
<feature type="transmembrane region" description="Helical" evidence="2">
    <location>
        <begin position="77"/>
        <end position="98"/>
    </location>
</feature>
<feature type="transmembrane region" description="Helical" evidence="2">
    <location>
        <begin position="113"/>
        <end position="133"/>
    </location>
</feature>
<feature type="transmembrane region" description="Helical" evidence="2">
    <location>
        <begin position="178"/>
        <end position="198"/>
    </location>
</feature>
<feature type="transmembrane region" description="Helical" evidence="2">
    <location>
        <begin position="226"/>
        <end position="246"/>
    </location>
</feature>
<feature type="transmembrane region" description="Helical" evidence="2">
    <location>
        <begin position="288"/>
        <end position="308"/>
    </location>
</feature>
<feature type="transmembrane region" description="Helical" evidence="2">
    <location>
        <begin position="320"/>
        <end position="340"/>
    </location>
</feature>
<feature type="transmembrane region" description="Helical" evidence="2">
    <location>
        <begin position="347"/>
        <end position="367"/>
    </location>
</feature>
<feature type="binding site" description="axial binding residue" evidence="2">
    <location>
        <position position="83"/>
    </location>
    <ligand>
        <name>heme b</name>
        <dbReference type="ChEBI" id="CHEBI:60344"/>
        <label>b562</label>
    </ligand>
    <ligandPart>
        <name>Fe</name>
        <dbReference type="ChEBI" id="CHEBI:18248"/>
    </ligandPart>
</feature>
<feature type="binding site" description="axial binding residue" evidence="2">
    <location>
        <position position="97"/>
    </location>
    <ligand>
        <name>heme b</name>
        <dbReference type="ChEBI" id="CHEBI:60344"/>
        <label>b566</label>
    </ligand>
    <ligandPart>
        <name>Fe</name>
        <dbReference type="ChEBI" id="CHEBI:18248"/>
    </ligandPart>
</feature>
<feature type="binding site" description="axial binding residue" evidence="2">
    <location>
        <position position="182"/>
    </location>
    <ligand>
        <name>heme b</name>
        <dbReference type="ChEBI" id="CHEBI:60344"/>
        <label>b562</label>
    </ligand>
    <ligandPart>
        <name>Fe</name>
        <dbReference type="ChEBI" id="CHEBI:18248"/>
    </ligandPart>
</feature>
<feature type="binding site" description="axial binding residue" evidence="2">
    <location>
        <position position="196"/>
    </location>
    <ligand>
        <name>heme b</name>
        <dbReference type="ChEBI" id="CHEBI:60344"/>
        <label>b566</label>
    </ligand>
    <ligandPart>
        <name>Fe</name>
        <dbReference type="ChEBI" id="CHEBI:18248"/>
    </ligandPart>
</feature>
<feature type="binding site" evidence="2">
    <location>
        <position position="201"/>
    </location>
    <ligand>
        <name>a ubiquinone</name>
        <dbReference type="ChEBI" id="CHEBI:16389"/>
    </ligand>
</feature>
<feature type="sequence variant" description="In strain: Isolate IZEA7514.">
    <original>V</original>
    <variation>I</variation>
    <location>
        <position position="39"/>
    </location>
</feature>
<comment type="function">
    <text evidence="2">Component of the ubiquinol-cytochrome c reductase complex (complex III or cytochrome b-c1 complex) that is part of the mitochondrial respiratory chain. The b-c1 complex mediates electron transfer from ubiquinol to cytochrome c. Contributes to the generation of a proton gradient across the mitochondrial membrane that is then used for ATP synthesis.</text>
</comment>
<comment type="cofactor">
    <cofactor evidence="2">
        <name>heme b</name>
        <dbReference type="ChEBI" id="CHEBI:60344"/>
    </cofactor>
    <text evidence="2">Binds 2 heme b groups non-covalently.</text>
</comment>
<comment type="subunit">
    <text evidence="2">The cytochrome bc1 complex contains 11 subunits: 3 respiratory subunits (MT-CYB, CYC1 and UQCRFS1), 2 core proteins (UQCRC1 and UQCRC2) and 6 low-molecular weight proteins (UQCRH/QCR6, UQCRB/QCR7, UQCRQ/QCR8, UQCR10/QCR9, UQCR11/QCR10 and a cleavage product of UQCRFS1). This cytochrome bc1 complex then forms a dimer.</text>
</comment>
<comment type="subcellular location">
    <subcellularLocation>
        <location evidence="2">Mitochondrion inner membrane</location>
        <topology evidence="2">Multi-pass membrane protein</topology>
    </subcellularLocation>
</comment>
<comment type="miscellaneous">
    <text evidence="1">Heme 1 (or BL or b562) is low-potential and absorbs at about 562 nm, and heme 2 (or BH or b566) is high-potential and absorbs at about 566 nm.</text>
</comment>
<comment type="similarity">
    <text evidence="3 4">Belongs to the cytochrome b family.</text>
</comment>
<comment type="caution">
    <text evidence="2">The full-length protein contains only eight transmembrane helices, not nine as predicted by bioinformatics tools.</text>
</comment>
<dbReference type="EMBL" id="AB175124">
    <property type="protein sequence ID" value="BAE92689.1"/>
    <property type="molecule type" value="Genomic_DNA"/>
</dbReference>
<dbReference type="EMBL" id="AB175125">
    <property type="protein sequence ID" value="BAE92690.1"/>
    <property type="molecule type" value="Genomic_DNA"/>
</dbReference>
<dbReference type="SMR" id="Q1XIK7"/>
<dbReference type="GO" id="GO:0005743">
    <property type="term" value="C:mitochondrial inner membrane"/>
    <property type="evidence" value="ECO:0007669"/>
    <property type="project" value="UniProtKB-SubCell"/>
</dbReference>
<dbReference type="GO" id="GO:0045275">
    <property type="term" value="C:respiratory chain complex III"/>
    <property type="evidence" value="ECO:0007669"/>
    <property type="project" value="InterPro"/>
</dbReference>
<dbReference type="GO" id="GO:0046872">
    <property type="term" value="F:metal ion binding"/>
    <property type="evidence" value="ECO:0007669"/>
    <property type="project" value="UniProtKB-KW"/>
</dbReference>
<dbReference type="GO" id="GO:0008121">
    <property type="term" value="F:ubiquinol-cytochrome-c reductase activity"/>
    <property type="evidence" value="ECO:0007669"/>
    <property type="project" value="InterPro"/>
</dbReference>
<dbReference type="GO" id="GO:0006122">
    <property type="term" value="P:mitochondrial electron transport, ubiquinol to cytochrome c"/>
    <property type="evidence" value="ECO:0007669"/>
    <property type="project" value="TreeGrafter"/>
</dbReference>
<dbReference type="CDD" id="cd00290">
    <property type="entry name" value="cytochrome_b_C"/>
    <property type="match status" value="1"/>
</dbReference>
<dbReference type="CDD" id="cd00284">
    <property type="entry name" value="Cytochrome_b_N"/>
    <property type="match status" value="1"/>
</dbReference>
<dbReference type="FunFam" id="1.20.810.10:FF:000002">
    <property type="entry name" value="Cytochrome b"/>
    <property type="match status" value="1"/>
</dbReference>
<dbReference type="Gene3D" id="1.20.810.10">
    <property type="entry name" value="Cytochrome Bc1 Complex, Chain C"/>
    <property type="match status" value="1"/>
</dbReference>
<dbReference type="InterPro" id="IPR005798">
    <property type="entry name" value="Cyt_b/b6_C"/>
</dbReference>
<dbReference type="InterPro" id="IPR036150">
    <property type="entry name" value="Cyt_b/b6_C_sf"/>
</dbReference>
<dbReference type="InterPro" id="IPR005797">
    <property type="entry name" value="Cyt_b/b6_N"/>
</dbReference>
<dbReference type="InterPro" id="IPR027387">
    <property type="entry name" value="Cytb/b6-like_sf"/>
</dbReference>
<dbReference type="InterPro" id="IPR030689">
    <property type="entry name" value="Cytochrome_b"/>
</dbReference>
<dbReference type="InterPro" id="IPR048260">
    <property type="entry name" value="Cytochrome_b_C_euk/bac"/>
</dbReference>
<dbReference type="InterPro" id="IPR048259">
    <property type="entry name" value="Cytochrome_b_N_euk/bac"/>
</dbReference>
<dbReference type="InterPro" id="IPR016174">
    <property type="entry name" value="Di-haem_cyt_TM"/>
</dbReference>
<dbReference type="PANTHER" id="PTHR19271">
    <property type="entry name" value="CYTOCHROME B"/>
    <property type="match status" value="1"/>
</dbReference>
<dbReference type="PANTHER" id="PTHR19271:SF16">
    <property type="entry name" value="CYTOCHROME B"/>
    <property type="match status" value="1"/>
</dbReference>
<dbReference type="Pfam" id="PF00032">
    <property type="entry name" value="Cytochrom_B_C"/>
    <property type="match status" value="1"/>
</dbReference>
<dbReference type="Pfam" id="PF00033">
    <property type="entry name" value="Cytochrome_B"/>
    <property type="match status" value="1"/>
</dbReference>
<dbReference type="PIRSF" id="PIRSF038885">
    <property type="entry name" value="COB"/>
    <property type="match status" value="1"/>
</dbReference>
<dbReference type="SUPFAM" id="SSF81648">
    <property type="entry name" value="a domain/subunit of cytochrome bc1 complex (Ubiquinol-cytochrome c reductase)"/>
    <property type="match status" value="1"/>
</dbReference>
<dbReference type="SUPFAM" id="SSF81342">
    <property type="entry name" value="Transmembrane di-heme cytochromes"/>
    <property type="match status" value="1"/>
</dbReference>
<dbReference type="PROSITE" id="PS51003">
    <property type="entry name" value="CYTB_CTER"/>
    <property type="match status" value="1"/>
</dbReference>
<dbReference type="PROSITE" id="PS51002">
    <property type="entry name" value="CYTB_NTER"/>
    <property type="match status" value="1"/>
</dbReference>
<accession>Q1XIK7</accession>
<accession>Q1XIK6</accession>
<sequence length="379" mass="42613">MTNLRKTHPLMKIVNSSFIDLPAPSNISSWWNFGSLLGVCLIIQILTGLFLAMHYTSDTMTAFSSVTHICRDVNYGWLIRYLHANGASMFFICLFLHVGRGLYYGSYMYLETWNIGVLLLFAVMATAFMGYVLPWGQMSFWGATVITNLLSAIPYIGSDLVEWIWGGFSVDKATLTRFFAFHFILPFIIAALAGVHLLFLHETGSNNPSGLCSDADKIPFHPYYTIKDILGVLLLILALTSLVLFSPDLLGDPDNYTPANPLNTPPHIKPEWYFLFAYAILRSIPNKLGGVLALVLSILILAVVPFLHTSKQRSMMFRPFSQCLFWILVADLLTLTWIGGQPVEHPFIIIGQLASILYFLLILVIMPITSLFENNLLKW</sequence>
<gene>
    <name type="primary">MT-CYB</name>
    <name type="synonym">COB</name>
    <name type="synonym">CYTB</name>
    <name type="synonym">MTCYB</name>
</gene>
<evidence type="ECO:0000250" key="1"/>
<evidence type="ECO:0000250" key="2">
    <source>
        <dbReference type="UniProtKB" id="P00157"/>
    </source>
</evidence>
<evidence type="ECO:0000255" key="3">
    <source>
        <dbReference type="PROSITE-ProRule" id="PRU00967"/>
    </source>
</evidence>
<evidence type="ECO:0000255" key="4">
    <source>
        <dbReference type="PROSITE-ProRule" id="PRU00968"/>
    </source>
</evidence>
<reference key="1">
    <citation type="submission" date="2004-03" db="EMBL/GenBank/DDBJ databases">
        <title>Molecular phylogenetics of the Soricidae (Insectivora, Mammalia) based on mitochondrial cytochrome b gene sequences.</title>
        <authorList>
            <person name="Ohdachi S.D."/>
            <person name="Iwasa M.A."/>
            <person name="Abe H."/>
            <person name="Vogel P."/>
            <person name="Oshida T."/>
            <person name="Lin L.K."/>
            <person name="Hasegawa M."/>
        </authorList>
    </citation>
    <scope>NUCLEOTIDE SEQUENCE [GENOMIC DNA]</scope>
    <source>
        <strain>Isolate IZEA1394</strain>
        <strain>Isolate IZEA7514</strain>
        <tissue>Liver</tissue>
    </source>
</reference>
<keyword id="KW-0249">Electron transport</keyword>
<keyword id="KW-0349">Heme</keyword>
<keyword id="KW-0408">Iron</keyword>
<keyword id="KW-0472">Membrane</keyword>
<keyword id="KW-0479">Metal-binding</keyword>
<keyword id="KW-0496">Mitochondrion</keyword>
<keyword id="KW-0999">Mitochondrion inner membrane</keyword>
<keyword id="KW-0679">Respiratory chain</keyword>
<keyword id="KW-0812">Transmembrane</keyword>
<keyword id="KW-1133">Transmembrane helix</keyword>
<keyword id="KW-0813">Transport</keyword>
<keyword id="KW-0830">Ubiquinone</keyword>
<geneLocation type="mitochondrion"/>
<protein>
    <recommendedName>
        <fullName>Cytochrome b</fullName>
    </recommendedName>
    <alternativeName>
        <fullName>Complex III subunit 3</fullName>
    </alternativeName>
    <alternativeName>
        <fullName>Complex III subunit III</fullName>
    </alternativeName>
    <alternativeName>
        <fullName>Cytochrome b-c1 complex subunit 3</fullName>
    </alternativeName>
    <alternativeName>
        <fullName>Ubiquinol-cytochrome-c reductase complex cytochrome b subunit</fullName>
    </alternativeName>
</protein>
<proteinExistence type="inferred from homology"/>